<comment type="catalytic activity">
    <reaction evidence="1">
        <text>tRNA(His) + L-histidine + ATP = L-histidyl-tRNA(His) + AMP + diphosphate + H(+)</text>
        <dbReference type="Rhea" id="RHEA:17313"/>
        <dbReference type="Rhea" id="RHEA-COMP:9665"/>
        <dbReference type="Rhea" id="RHEA-COMP:9689"/>
        <dbReference type="ChEBI" id="CHEBI:15378"/>
        <dbReference type="ChEBI" id="CHEBI:30616"/>
        <dbReference type="ChEBI" id="CHEBI:33019"/>
        <dbReference type="ChEBI" id="CHEBI:57595"/>
        <dbReference type="ChEBI" id="CHEBI:78442"/>
        <dbReference type="ChEBI" id="CHEBI:78527"/>
        <dbReference type="ChEBI" id="CHEBI:456215"/>
        <dbReference type="EC" id="6.1.1.21"/>
    </reaction>
</comment>
<comment type="subunit">
    <text evidence="1">Homodimer.</text>
</comment>
<comment type="subcellular location">
    <subcellularLocation>
        <location evidence="1">Cytoplasm</location>
    </subcellularLocation>
</comment>
<comment type="similarity">
    <text evidence="1">Belongs to the class-II aminoacyl-tRNA synthetase family.</text>
</comment>
<feature type="chain" id="PRO_1000095526" description="Histidine--tRNA ligase">
    <location>
        <begin position="1"/>
        <end position="423"/>
    </location>
</feature>
<keyword id="KW-0030">Aminoacyl-tRNA synthetase</keyword>
<keyword id="KW-0067">ATP-binding</keyword>
<keyword id="KW-0963">Cytoplasm</keyword>
<keyword id="KW-0436">Ligase</keyword>
<keyword id="KW-0547">Nucleotide-binding</keyword>
<keyword id="KW-0648">Protein biosynthesis</keyword>
<dbReference type="EC" id="6.1.1.21" evidence="1"/>
<dbReference type="EMBL" id="CP001091">
    <property type="protein sequence ID" value="ACE61886.1"/>
    <property type="molecule type" value="Genomic_DNA"/>
</dbReference>
<dbReference type="RefSeq" id="WP_005617650.1">
    <property type="nucleotide sequence ID" value="NC_010939.1"/>
</dbReference>
<dbReference type="SMR" id="B3GY63"/>
<dbReference type="KEGG" id="apa:APP7_1234"/>
<dbReference type="HOGENOM" id="CLU_025113_1_1_6"/>
<dbReference type="Proteomes" id="UP000001226">
    <property type="component" value="Chromosome"/>
</dbReference>
<dbReference type="GO" id="GO:0005737">
    <property type="term" value="C:cytoplasm"/>
    <property type="evidence" value="ECO:0007669"/>
    <property type="project" value="UniProtKB-SubCell"/>
</dbReference>
<dbReference type="GO" id="GO:0005524">
    <property type="term" value="F:ATP binding"/>
    <property type="evidence" value="ECO:0007669"/>
    <property type="project" value="UniProtKB-UniRule"/>
</dbReference>
<dbReference type="GO" id="GO:0004821">
    <property type="term" value="F:histidine-tRNA ligase activity"/>
    <property type="evidence" value="ECO:0007669"/>
    <property type="project" value="UniProtKB-UniRule"/>
</dbReference>
<dbReference type="GO" id="GO:0006427">
    <property type="term" value="P:histidyl-tRNA aminoacylation"/>
    <property type="evidence" value="ECO:0007669"/>
    <property type="project" value="UniProtKB-UniRule"/>
</dbReference>
<dbReference type="CDD" id="cd00773">
    <property type="entry name" value="HisRS-like_core"/>
    <property type="match status" value="1"/>
</dbReference>
<dbReference type="CDD" id="cd00859">
    <property type="entry name" value="HisRS_anticodon"/>
    <property type="match status" value="1"/>
</dbReference>
<dbReference type="FunFam" id="3.30.930.10:FF:000005">
    <property type="entry name" value="Histidine--tRNA ligase"/>
    <property type="match status" value="1"/>
</dbReference>
<dbReference type="Gene3D" id="3.40.50.800">
    <property type="entry name" value="Anticodon-binding domain"/>
    <property type="match status" value="1"/>
</dbReference>
<dbReference type="Gene3D" id="3.30.930.10">
    <property type="entry name" value="Bira Bifunctional Protein, Domain 2"/>
    <property type="match status" value="1"/>
</dbReference>
<dbReference type="HAMAP" id="MF_00127">
    <property type="entry name" value="His_tRNA_synth"/>
    <property type="match status" value="1"/>
</dbReference>
<dbReference type="InterPro" id="IPR006195">
    <property type="entry name" value="aa-tRNA-synth_II"/>
</dbReference>
<dbReference type="InterPro" id="IPR045864">
    <property type="entry name" value="aa-tRNA-synth_II/BPL/LPL"/>
</dbReference>
<dbReference type="InterPro" id="IPR004154">
    <property type="entry name" value="Anticodon-bd"/>
</dbReference>
<dbReference type="InterPro" id="IPR036621">
    <property type="entry name" value="Anticodon-bd_dom_sf"/>
</dbReference>
<dbReference type="InterPro" id="IPR015807">
    <property type="entry name" value="His-tRNA-ligase"/>
</dbReference>
<dbReference type="InterPro" id="IPR041715">
    <property type="entry name" value="HisRS-like_core"/>
</dbReference>
<dbReference type="InterPro" id="IPR004516">
    <property type="entry name" value="HisRS/HisZ"/>
</dbReference>
<dbReference type="InterPro" id="IPR033656">
    <property type="entry name" value="HisRS_anticodon"/>
</dbReference>
<dbReference type="NCBIfam" id="TIGR00442">
    <property type="entry name" value="hisS"/>
    <property type="match status" value="1"/>
</dbReference>
<dbReference type="PANTHER" id="PTHR43707:SF1">
    <property type="entry name" value="HISTIDINE--TRNA LIGASE, MITOCHONDRIAL-RELATED"/>
    <property type="match status" value="1"/>
</dbReference>
<dbReference type="PANTHER" id="PTHR43707">
    <property type="entry name" value="HISTIDYL-TRNA SYNTHETASE"/>
    <property type="match status" value="1"/>
</dbReference>
<dbReference type="Pfam" id="PF03129">
    <property type="entry name" value="HGTP_anticodon"/>
    <property type="match status" value="1"/>
</dbReference>
<dbReference type="Pfam" id="PF13393">
    <property type="entry name" value="tRNA-synt_His"/>
    <property type="match status" value="1"/>
</dbReference>
<dbReference type="PIRSF" id="PIRSF001549">
    <property type="entry name" value="His-tRNA_synth"/>
    <property type="match status" value="1"/>
</dbReference>
<dbReference type="SUPFAM" id="SSF52954">
    <property type="entry name" value="Class II aaRS ABD-related"/>
    <property type="match status" value="1"/>
</dbReference>
<dbReference type="SUPFAM" id="SSF55681">
    <property type="entry name" value="Class II aaRS and biotin synthetases"/>
    <property type="match status" value="1"/>
</dbReference>
<dbReference type="PROSITE" id="PS50862">
    <property type="entry name" value="AA_TRNA_LIGASE_II"/>
    <property type="match status" value="1"/>
</dbReference>
<organism>
    <name type="scientific">Actinobacillus pleuropneumoniae serotype 7 (strain AP76)</name>
    <dbReference type="NCBI Taxonomy" id="537457"/>
    <lineage>
        <taxon>Bacteria</taxon>
        <taxon>Pseudomonadati</taxon>
        <taxon>Pseudomonadota</taxon>
        <taxon>Gammaproteobacteria</taxon>
        <taxon>Pasteurellales</taxon>
        <taxon>Pasteurellaceae</taxon>
        <taxon>Actinobacillus</taxon>
    </lineage>
</organism>
<evidence type="ECO:0000255" key="1">
    <source>
        <dbReference type="HAMAP-Rule" id="MF_00127"/>
    </source>
</evidence>
<proteinExistence type="inferred from homology"/>
<reference key="1">
    <citation type="submission" date="2008-06" db="EMBL/GenBank/DDBJ databases">
        <title>Genome and proteome analysis of A. pleuropneumoniae serotype 7.</title>
        <authorList>
            <person name="Linke B."/>
            <person name="Buettner F."/>
            <person name="Martinez-Arias R."/>
            <person name="Goesmann A."/>
            <person name="Baltes N."/>
            <person name="Tegetmeyer H."/>
            <person name="Singh M."/>
            <person name="Gerlach G.F."/>
        </authorList>
    </citation>
    <scope>NUCLEOTIDE SEQUENCE [LARGE SCALE GENOMIC DNA]</scope>
    <source>
        <strain>AP76</strain>
    </source>
</reference>
<gene>
    <name evidence="1" type="primary">hisS</name>
    <name type="ordered locus">APP7_1234</name>
</gene>
<sequence length="423" mass="47613">MAKNIQAIRGMNDCSPTESPLWQWIENKVRNVLAGYGYSEVRMPIVESTPLFARAIGEVTDVVSKEMYTFWDNDEQLTLRPEGTAGCVRAAIERGWIYNNEQRLWYMGPMFRHERPQKGRYRQFHQAGVEVFGIPNPEIDAELIILTARLWKELGIDQHVSLQLNSIGSLEARANYRSALVKFLENHTALMSDEEKERLVKNPLRILDTKNQALQEVLNDAPKLLDYLDDDSREHFAHLCHLLDAMGIAYEVNPKLVRGLDYYNKTVFEWVTSALGSQGTVCGGGRYDGLVEQLGGHATQGVGFAMGLERLVLLVQEVNKEINLPKAVDVYVVYSGEGATLNAFQMAERIRSELPQLGVMTHCSGGNFKKQFKRADKVEAQIALVIGESEVEQQTVVLKDLQSGAEQVIIAQADLIAELTKRF</sequence>
<protein>
    <recommendedName>
        <fullName evidence="1">Histidine--tRNA ligase</fullName>
        <ecNumber evidence="1">6.1.1.21</ecNumber>
    </recommendedName>
    <alternativeName>
        <fullName evidence="1">Histidyl-tRNA synthetase</fullName>
        <shortName evidence="1">HisRS</shortName>
    </alternativeName>
</protein>
<name>SYH_ACTP7</name>
<accession>B3GY63</accession>